<evidence type="ECO:0000255" key="1">
    <source>
        <dbReference type="HAMAP-Rule" id="MF_04074"/>
    </source>
</evidence>
<proteinExistence type="inferred from homology"/>
<keyword id="KW-1074">Activation of host NF-kappa-B by virus</keyword>
<keyword id="KW-0010">Activator</keyword>
<keyword id="KW-0053">Apoptosis</keyword>
<keyword id="KW-1035">Host cytoplasm</keyword>
<keyword id="KW-1079">Host G2/M cell cycle arrest by virus</keyword>
<keyword id="KW-1045">Host mitochondrion</keyword>
<keyword id="KW-1048">Host nucleus</keyword>
<keyword id="KW-0945">Host-virus interaction</keyword>
<keyword id="KW-1121">Modulation of host cell cycle by virus</keyword>
<keyword id="KW-0804">Transcription</keyword>
<keyword id="KW-0805">Transcription regulation</keyword>
<protein>
    <recommendedName>
        <fullName evidence="1">Protein X</fullName>
    </recommendedName>
    <alternativeName>
        <fullName evidence="1">HBx</fullName>
    </alternativeName>
    <alternativeName>
        <fullName evidence="1">Peptide X</fullName>
    </alternativeName>
    <alternativeName>
        <fullName evidence="1">pX</fullName>
    </alternativeName>
</protein>
<organism>
    <name type="scientific">Hepatitis B virus genotype G (isolate IG29227/2000)</name>
    <name type="common">HBV-G</name>
    <dbReference type="NCBI Taxonomy" id="489538"/>
    <lineage>
        <taxon>Viruses</taxon>
        <taxon>Riboviria</taxon>
        <taxon>Pararnavirae</taxon>
        <taxon>Artverviricota</taxon>
        <taxon>Revtraviricetes</taxon>
        <taxon>Blubervirales</taxon>
        <taxon>Hepadnaviridae</taxon>
        <taxon>Orthohepadnavirus</taxon>
        <taxon>Hepatitis B virus</taxon>
        <taxon>hepatitis B virus genotype G</taxon>
    </lineage>
</organism>
<accession>Q9IBI5</accession>
<reference key="1">
    <citation type="journal article" date="2000" name="J. Gen. Virol.">
        <title>A new genotype of hepatitis B virus: complete genome and phylogenetic relatedness.</title>
        <authorList>
            <person name="Stuyver L."/>
            <person name="De Gendt S."/>
            <person name="Van Geyt C."/>
            <person name="Zoulim F."/>
            <person name="Fried M."/>
            <person name="Schinazi R.F."/>
            <person name="Rossau R."/>
        </authorList>
    </citation>
    <scope>NUCLEOTIDE SEQUENCE [GENOMIC DNA]</scope>
</reference>
<reference key="2">
    <citation type="journal article" date="2004" name="J. Virol.">
        <title>The enigmatic X gene of hepatitis B virus.</title>
        <authorList>
            <person name="Bouchard M.J."/>
            <person name="Schneider R.J."/>
        </authorList>
    </citation>
    <scope>REVIEW</scope>
</reference>
<reference key="3">
    <citation type="journal article" date="2006" name="Cancer Sci.">
        <title>Molecular functions and biological roles of hepatitis B virus x protein.</title>
        <authorList>
            <person name="Tang H."/>
            <person name="Oishi N."/>
            <person name="Kaneko S."/>
            <person name="Murakami S."/>
        </authorList>
    </citation>
    <scope>REVIEW</scope>
</reference>
<comment type="function">
    <text evidence="1">Multifunctional protein that plays a role in silencing host antiviral defenses and promoting viral transcription. Does not seem to be essential for HBV infection. May be directly involved in development of cirrhosis and liver cancer (hepatocellular carcinoma). Most of cytosolic activities involve modulation of cytosolic calcium. The effect on apoptosis is controversial depending on the cell types in which the studies have been conducted. May induce apoptosis by localizing in mitochondria and causing loss of mitochondrial membrane potential. May also modulate apoptosis by binding host CFLAR, a key regulator of the death-inducing signaling complex (DISC). Promotes viral transcription by using the host E3 ubiquitin ligase DDB1 to target the SMC5-SMC6 complex to proteasomal degradation. This host complex would otherwise bind to viral episomal DNA, and prevents its transcription. Moderately stimulates transcription of many different viral and cellular transcription elements. Promoters and enhancers stimulated by HBx contain DNA binding sites for NF-kappa-B, AP-1, AP-2, c-EBP, ATF/CREB, or the calcium-activated factor NF-AT.</text>
</comment>
<comment type="subunit">
    <text evidence="1">May form homodimer. May interact with host CEBPA, CFLAR, CREB1, DDB1, E4F1, HBXIP, HSPD1/HSP60, NFKBIA, POLR2E and SMAD4. Interacts with host SMC5-SMC6 complex and induces its degradation. Interacts with host TRPC4AP; leading to prevent ubiquitination of TRPC4AP. Interacts with host PLSCR1; this interaction promotes ubiquitination and degradation of HBx and impairs HBx-mediated cell proliferation.</text>
</comment>
<comment type="subcellular location">
    <subcellularLocation>
        <location evidence="1">Host cytoplasm</location>
    </subcellularLocation>
    <subcellularLocation>
        <location evidence="1">Host nucleus</location>
    </subcellularLocation>
    <subcellularLocation>
        <location evidence="1">Host mitochondrion</location>
    </subcellularLocation>
    <text evidence="1">Mainly cytoplasmic as only a fraction is detected in the nucleus. In cytoplasm, a minor fraction associates with mitochondria or proteasomes.</text>
</comment>
<comment type="PTM">
    <text evidence="1">A fraction may be phosphorylated in insect cells and HepG2 cells, a human hepatoblastoma cell line. Phosphorylated in vitro by host protein kinase C or mitogen-activated protein kinase. N-acetylated in insect cells.</text>
</comment>
<comment type="similarity">
    <text evidence="1">Belongs to the orthohepadnavirus protein X family.</text>
</comment>
<comment type="caution">
    <text>Transcriptional activities should be taken with a grain of salt. As of 2007, all studies demonstrating in vivo interaction between protein X and transcriptional components were performed with significant overexpression of both proteins and in the absence of viral infection.</text>
</comment>
<gene>
    <name evidence="1" type="primary">X</name>
</gene>
<feature type="chain" id="PRO_0000319921" description="Protein X">
    <location>
        <begin position="1"/>
        <end position="154"/>
    </location>
</feature>
<feature type="region of interest" description="Mitochondrial targeting sequence" evidence="1">
    <location>
        <begin position="68"/>
        <end position="117"/>
    </location>
</feature>
<name>X_HBVG3</name>
<sequence length="154" mass="16696">MAARLCCQLDPSRDVLCLRPVSAESSGRPLPGPFGALSPPSPSAVPADHGAHLSLRGLPVCSFSSAGPCALRFTSARYMETAMNTSHHLPRQLYKWTLGLFVMSTTGVEKYFKDCVFAEWEELGNESRLMTFVLGGCRHKLVCAPAPCNFFTSA</sequence>
<dbReference type="EMBL" id="AF160501">
    <property type="protein sequence ID" value="AAF34736.1"/>
    <property type="molecule type" value="Genomic_DNA"/>
</dbReference>
<dbReference type="SMR" id="Q9IBI5"/>
<dbReference type="Proteomes" id="UP000007407">
    <property type="component" value="Segment"/>
</dbReference>
<dbReference type="GO" id="GO:0033650">
    <property type="term" value="C:host cell mitochondrion"/>
    <property type="evidence" value="ECO:0007669"/>
    <property type="project" value="UniProtKB-SubCell"/>
</dbReference>
<dbReference type="GO" id="GO:0042025">
    <property type="term" value="C:host cell nucleus"/>
    <property type="evidence" value="ECO:0007669"/>
    <property type="project" value="UniProtKB-SubCell"/>
</dbReference>
<dbReference type="GO" id="GO:0006351">
    <property type="term" value="P:DNA-templated transcription"/>
    <property type="evidence" value="ECO:0007669"/>
    <property type="project" value="UniProtKB-UniRule"/>
</dbReference>
<dbReference type="GO" id="GO:0085033">
    <property type="term" value="P:symbiont-mediated activation of host NF-kappaB cascade"/>
    <property type="evidence" value="ECO:0007669"/>
    <property type="project" value="UniProtKB-UniRule"/>
</dbReference>
<dbReference type="GO" id="GO:0039592">
    <property type="term" value="P:symbiont-mediated arrest of host cell cycle during G2/M transition"/>
    <property type="evidence" value="ECO:0007669"/>
    <property type="project" value="UniProtKB-UniRule"/>
</dbReference>
<dbReference type="GO" id="GO:0019079">
    <property type="term" value="P:viral genome replication"/>
    <property type="evidence" value="ECO:0007669"/>
    <property type="project" value="UniProtKB-UniRule"/>
</dbReference>
<dbReference type="HAMAP" id="MF_04074">
    <property type="entry name" value="HBV_X"/>
    <property type="match status" value="1"/>
</dbReference>
<dbReference type="InterPro" id="IPR000236">
    <property type="entry name" value="Transactivation_prot_X"/>
</dbReference>
<dbReference type="Pfam" id="PF00739">
    <property type="entry name" value="X"/>
    <property type="match status" value="1"/>
</dbReference>
<organismHost>
    <name type="scientific">Homo sapiens</name>
    <name type="common">Human</name>
    <dbReference type="NCBI Taxonomy" id="9606"/>
</organismHost>
<organismHost>
    <name type="scientific">Pan troglodytes</name>
    <name type="common">Chimpanzee</name>
    <dbReference type="NCBI Taxonomy" id="9598"/>
</organismHost>